<reference key="1">
    <citation type="journal article" date="2005" name="Nature">
        <title>Genomic sequence of the pathogenic and allergenic filamentous fungus Aspergillus fumigatus.</title>
        <authorList>
            <person name="Nierman W.C."/>
            <person name="Pain A."/>
            <person name="Anderson M.J."/>
            <person name="Wortman J.R."/>
            <person name="Kim H.S."/>
            <person name="Arroyo J."/>
            <person name="Berriman M."/>
            <person name="Abe K."/>
            <person name="Archer D.B."/>
            <person name="Bermejo C."/>
            <person name="Bennett J.W."/>
            <person name="Bowyer P."/>
            <person name="Chen D."/>
            <person name="Collins M."/>
            <person name="Coulsen R."/>
            <person name="Davies R."/>
            <person name="Dyer P.S."/>
            <person name="Farman M.L."/>
            <person name="Fedorova N."/>
            <person name="Fedorova N.D."/>
            <person name="Feldblyum T.V."/>
            <person name="Fischer R."/>
            <person name="Fosker N."/>
            <person name="Fraser A."/>
            <person name="Garcia J.L."/>
            <person name="Garcia M.J."/>
            <person name="Goble A."/>
            <person name="Goldman G.H."/>
            <person name="Gomi K."/>
            <person name="Griffith-Jones S."/>
            <person name="Gwilliam R."/>
            <person name="Haas B.J."/>
            <person name="Haas H."/>
            <person name="Harris D.E."/>
            <person name="Horiuchi H."/>
            <person name="Huang J."/>
            <person name="Humphray S."/>
            <person name="Jimenez J."/>
            <person name="Keller N."/>
            <person name="Khouri H."/>
            <person name="Kitamoto K."/>
            <person name="Kobayashi T."/>
            <person name="Konzack S."/>
            <person name="Kulkarni R."/>
            <person name="Kumagai T."/>
            <person name="Lafton A."/>
            <person name="Latge J.-P."/>
            <person name="Li W."/>
            <person name="Lord A."/>
            <person name="Lu C."/>
            <person name="Majoros W.H."/>
            <person name="May G.S."/>
            <person name="Miller B.L."/>
            <person name="Mohamoud Y."/>
            <person name="Molina M."/>
            <person name="Monod M."/>
            <person name="Mouyna I."/>
            <person name="Mulligan S."/>
            <person name="Murphy L.D."/>
            <person name="O'Neil S."/>
            <person name="Paulsen I."/>
            <person name="Penalva M.A."/>
            <person name="Pertea M."/>
            <person name="Price C."/>
            <person name="Pritchard B.L."/>
            <person name="Quail M.A."/>
            <person name="Rabbinowitsch E."/>
            <person name="Rawlins N."/>
            <person name="Rajandream M.A."/>
            <person name="Reichard U."/>
            <person name="Renauld H."/>
            <person name="Robson G.D."/>
            <person name="Rodriguez de Cordoba S."/>
            <person name="Rodriguez-Pena J.M."/>
            <person name="Ronning C.M."/>
            <person name="Rutter S."/>
            <person name="Salzberg S.L."/>
            <person name="Sanchez M."/>
            <person name="Sanchez-Ferrero J.C."/>
            <person name="Saunders D."/>
            <person name="Seeger K."/>
            <person name="Squares R."/>
            <person name="Squares S."/>
            <person name="Takeuchi M."/>
            <person name="Tekaia F."/>
            <person name="Turner G."/>
            <person name="Vazquez de Aldana C.R."/>
            <person name="Weidman J."/>
            <person name="White O."/>
            <person name="Woodward J.R."/>
            <person name="Yu J.-H."/>
            <person name="Fraser C.M."/>
            <person name="Galagan J.E."/>
            <person name="Asai K."/>
            <person name="Machida M."/>
            <person name="Hall N."/>
            <person name="Barrell B.G."/>
            <person name="Denning D.W."/>
        </authorList>
    </citation>
    <scope>NUCLEOTIDE SEQUENCE [LARGE SCALE GENOMIC DNA]</scope>
    <source>
        <strain>ATCC MYA-4609 / CBS 101355 / FGSC A1100 / Af293</strain>
    </source>
</reference>
<accession>Q4WU00</accession>
<comment type="function">
    <text evidence="1">The spt4-spt5 complex mediates both activation and inhibition of transcription elongation, and plays a role in pre-mRNA processing. This complex seems to be important for the stability of the RNA polymerase II elongation machinery on the chromatin template but not for the inherent ability of this machinery to translocate down the gene (By similarity).</text>
</comment>
<comment type="subunit">
    <text evidence="1">Component of the spt4-spt5 complex. Interacts with RNA polymerase II (By similarity).</text>
</comment>
<comment type="subcellular location">
    <subcellularLocation>
        <location>Nucleus</location>
    </subcellularLocation>
    <subcellularLocation>
        <location evidence="1">Chromosome</location>
        <location evidence="1">Centromere</location>
    </subcellularLocation>
    <text evidence="1">Centromere and heterochromatin.</text>
</comment>
<comment type="similarity">
    <text evidence="3">Belongs to the SPT4 family.</text>
</comment>
<feature type="chain" id="PRO_0000238546" description="Transcription elongation factor spt4">
    <location>
        <begin position="1"/>
        <end position="156"/>
    </location>
</feature>
<feature type="zinc finger region" description="C4-type" evidence="2">
    <location>
        <begin position="18"/>
        <end position="38"/>
    </location>
</feature>
<dbReference type="EMBL" id="AAHF01000003">
    <property type="protein sequence ID" value="EAL91926.1"/>
    <property type="molecule type" value="Genomic_DNA"/>
</dbReference>
<dbReference type="RefSeq" id="XP_753964.1">
    <property type="nucleotide sequence ID" value="XM_748871.1"/>
</dbReference>
<dbReference type="SMR" id="Q4WU00"/>
<dbReference type="FunCoup" id="Q4WU00">
    <property type="interactions" value="442"/>
</dbReference>
<dbReference type="STRING" id="330879.Q4WU00"/>
<dbReference type="EnsemblFungi" id="EAL91926">
    <property type="protein sequence ID" value="EAL91926"/>
    <property type="gene ID" value="AFUA_5G06690"/>
</dbReference>
<dbReference type="GeneID" id="3511025"/>
<dbReference type="KEGG" id="afm:AFUA_5G06690"/>
<dbReference type="VEuPathDB" id="FungiDB:Afu5g06690"/>
<dbReference type="eggNOG" id="KOG3490">
    <property type="taxonomic scope" value="Eukaryota"/>
</dbReference>
<dbReference type="HOGENOM" id="CLU_138052_1_0_1"/>
<dbReference type="InParanoid" id="Q4WU00"/>
<dbReference type="OMA" id="NCKNANS"/>
<dbReference type="OrthoDB" id="248751at2759"/>
<dbReference type="Proteomes" id="UP000002530">
    <property type="component" value="Chromosome 5"/>
</dbReference>
<dbReference type="GO" id="GO:0000775">
    <property type="term" value="C:chromosome, centromeric region"/>
    <property type="evidence" value="ECO:0007669"/>
    <property type="project" value="UniProtKB-SubCell"/>
</dbReference>
<dbReference type="GO" id="GO:0032044">
    <property type="term" value="C:DSIF complex"/>
    <property type="evidence" value="ECO:0000318"/>
    <property type="project" value="GO_Central"/>
</dbReference>
<dbReference type="GO" id="GO:0000993">
    <property type="term" value="F:RNA polymerase II complex binding"/>
    <property type="evidence" value="ECO:0000318"/>
    <property type="project" value="GO_Central"/>
</dbReference>
<dbReference type="GO" id="GO:0008270">
    <property type="term" value="F:zinc ion binding"/>
    <property type="evidence" value="ECO:0007669"/>
    <property type="project" value="UniProtKB-KW"/>
</dbReference>
<dbReference type="GO" id="GO:0006397">
    <property type="term" value="P:mRNA processing"/>
    <property type="evidence" value="ECO:0007669"/>
    <property type="project" value="UniProtKB-KW"/>
</dbReference>
<dbReference type="GO" id="GO:0006355">
    <property type="term" value="P:regulation of DNA-templated transcription"/>
    <property type="evidence" value="ECO:0007669"/>
    <property type="project" value="InterPro"/>
</dbReference>
<dbReference type="GO" id="GO:0006368">
    <property type="term" value="P:transcription elongation by RNA polymerase II"/>
    <property type="evidence" value="ECO:0000318"/>
    <property type="project" value="GO_Central"/>
</dbReference>
<dbReference type="GO" id="GO:0140673">
    <property type="term" value="P:transcription elongation-coupled chromatin remodeling"/>
    <property type="evidence" value="ECO:0007669"/>
    <property type="project" value="InterPro"/>
</dbReference>
<dbReference type="CDD" id="cd07973">
    <property type="entry name" value="Spt4"/>
    <property type="match status" value="1"/>
</dbReference>
<dbReference type="FunFam" id="3.30.40.210:FF:000005">
    <property type="entry name" value="Transcription elongation factor SPT4"/>
    <property type="match status" value="1"/>
</dbReference>
<dbReference type="Gene3D" id="3.30.40.210">
    <property type="match status" value="1"/>
</dbReference>
<dbReference type="InterPro" id="IPR029040">
    <property type="entry name" value="RPABC4/Spt4"/>
</dbReference>
<dbReference type="InterPro" id="IPR009287">
    <property type="entry name" value="Spt4"/>
</dbReference>
<dbReference type="InterPro" id="IPR022800">
    <property type="entry name" value="Spt4/RpoE2_Znf"/>
</dbReference>
<dbReference type="InterPro" id="IPR038510">
    <property type="entry name" value="Spt4_sf"/>
</dbReference>
<dbReference type="PANTHER" id="PTHR12882">
    <property type="entry name" value="SUPPRESSOR OF TY 4"/>
    <property type="match status" value="1"/>
</dbReference>
<dbReference type="PANTHER" id="PTHR12882:SF1">
    <property type="entry name" value="TRANSCRIPTION ELONGATION FACTOR SPT4"/>
    <property type="match status" value="1"/>
</dbReference>
<dbReference type="Pfam" id="PF06093">
    <property type="entry name" value="Spt4"/>
    <property type="match status" value="1"/>
</dbReference>
<dbReference type="SMART" id="SM01389">
    <property type="entry name" value="Spt4"/>
    <property type="match status" value="1"/>
</dbReference>
<dbReference type="SUPFAM" id="SSF63393">
    <property type="entry name" value="RNA polymerase subunits"/>
    <property type="match status" value="1"/>
</dbReference>
<keyword id="KW-0137">Centromere</keyword>
<keyword id="KW-0158">Chromosome</keyword>
<keyword id="KW-0479">Metal-binding</keyword>
<keyword id="KW-0507">mRNA processing</keyword>
<keyword id="KW-0539">Nucleus</keyword>
<keyword id="KW-1185">Reference proteome</keyword>
<keyword id="KW-0804">Transcription</keyword>
<keyword id="KW-0862">Zinc</keyword>
<keyword id="KW-0863">Zinc-finger</keyword>
<name>SPT4_ASPFU</name>
<proteinExistence type="inferred from homology"/>
<protein>
    <recommendedName>
        <fullName>Transcription elongation factor spt4</fullName>
    </recommendedName>
    <alternativeName>
        <fullName>Chromatin elongation factor spt4</fullName>
    </alternativeName>
</protein>
<gene>
    <name type="primary">spt4</name>
    <name type="ORF">AFUA_5G06690</name>
</gene>
<sequence length="156" mass="17463">MSSSYYVTPSQQRTLRACMVCSLVQLHSKFMRDGCPNCDNVLGLRGNNDAIQECTSQVFEGLITLRDPSTSWVARWQRLEGYVAGTYAVKVTGSLPDDVITNLEDSGVRYIPYVYLPGSCVSGDTDRLVGGMAVRWRRRPEVLELSSEVEVQFAWI</sequence>
<organism>
    <name type="scientific">Aspergillus fumigatus (strain ATCC MYA-4609 / CBS 101355 / FGSC A1100 / Af293)</name>
    <name type="common">Neosartorya fumigata</name>
    <dbReference type="NCBI Taxonomy" id="330879"/>
    <lineage>
        <taxon>Eukaryota</taxon>
        <taxon>Fungi</taxon>
        <taxon>Dikarya</taxon>
        <taxon>Ascomycota</taxon>
        <taxon>Pezizomycotina</taxon>
        <taxon>Eurotiomycetes</taxon>
        <taxon>Eurotiomycetidae</taxon>
        <taxon>Eurotiales</taxon>
        <taxon>Aspergillaceae</taxon>
        <taxon>Aspergillus</taxon>
        <taxon>Aspergillus subgen. Fumigati</taxon>
    </lineage>
</organism>
<evidence type="ECO:0000250" key="1"/>
<evidence type="ECO:0000255" key="2"/>
<evidence type="ECO:0000305" key="3"/>